<gene>
    <name evidence="1" type="primary">purA</name>
    <name type="ordered locus">ECUMN_4710</name>
</gene>
<keyword id="KW-0963">Cytoplasm</keyword>
<keyword id="KW-0342">GTP-binding</keyword>
<keyword id="KW-0436">Ligase</keyword>
<keyword id="KW-0460">Magnesium</keyword>
<keyword id="KW-0479">Metal-binding</keyword>
<keyword id="KW-0547">Nucleotide-binding</keyword>
<keyword id="KW-0658">Purine biosynthesis</keyword>
<accession>B7NGB1</accession>
<sequence>MGNNVVVLGTQWGDEGKGKIVDLLTERAKYVVRYQGGHNAGHTLVINGEKTVLHLIPSGILRENVTSIIGNGVVLSPAALMKEMKELEDRGIPVRERLLLSEACPLILDYHVALDNAREKARGAKAIGTTGRGIGPAYEDKVARRGLRVGDLFDKETFAEKLKEVMEYHNFQLVNYYKAEAVDYQKVLDDTMAVADILTSMVVDVSDLLDQARQRGDFVMFEGAQGTLLDIDHGTYPYVTSSNTTAGGVATGSGLGPRYVDYVLGILKAYSTRVGAGPFPTELFDETGEFLCKQGNEFGATTGRRRRTGWLDTVAVRRAVQLNSLSGFCLTKLDVLDGLKEVKLCVAYRMPDGREVTTTPLAADDWKGVEPIYETMPGWSESTFGVKDRSGLPQAALNYIKRIEELTGVPIDIISTGPDRTETMILRDPFDA</sequence>
<protein>
    <recommendedName>
        <fullName evidence="1">Adenylosuccinate synthetase</fullName>
        <shortName evidence="1">AMPSase</shortName>
        <shortName evidence="1">AdSS</shortName>
        <ecNumber evidence="1">6.3.4.4</ecNumber>
    </recommendedName>
    <alternativeName>
        <fullName evidence="1">IMP--aspartate ligase</fullName>
    </alternativeName>
</protein>
<dbReference type="EC" id="6.3.4.4" evidence="1"/>
<dbReference type="EMBL" id="CU928163">
    <property type="protein sequence ID" value="CAR15823.1"/>
    <property type="molecule type" value="Genomic_DNA"/>
</dbReference>
<dbReference type="RefSeq" id="WP_000527955.1">
    <property type="nucleotide sequence ID" value="NC_011751.1"/>
</dbReference>
<dbReference type="RefSeq" id="YP_002415307.1">
    <property type="nucleotide sequence ID" value="NC_011751.1"/>
</dbReference>
<dbReference type="SMR" id="B7NGB1"/>
<dbReference type="STRING" id="585056.ECUMN_4710"/>
<dbReference type="GeneID" id="75202411"/>
<dbReference type="KEGG" id="eum:ECUMN_4710"/>
<dbReference type="PATRIC" id="fig|585056.7.peg.4873"/>
<dbReference type="HOGENOM" id="CLU_029848_0_0_6"/>
<dbReference type="UniPathway" id="UPA00075">
    <property type="reaction ID" value="UER00335"/>
</dbReference>
<dbReference type="Proteomes" id="UP000007097">
    <property type="component" value="Chromosome"/>
</dbReference>
<dbReference type="GO" id="GO:0005737">
    <property type="term" value="C:cytoplasm"/>
    <property type="evidence" value="ECO:0007669"/>
    <property type="project" value="UniProtKB-SubCell"/>
</dbReference>
<dbReference type="GO" id="GO:0004019">
    <property type="term" value="F:adenylosuccinate synthase activity"/>
    <property type="evidence" value="ECO:0007669"/>
    <property type="project" value="UniProtKB-UniRule"/>
</dbReference>
<dbReference type="GO" id="GO:0005525">
    <property type="term" value="F:GTP binding"/>
    <property type="evidence" value="ECO:0007669"/>
    <property type="project" value="UniProtKB-UniRule"/>
</dbReference>
<dbReference type="GO" id="GO:0000287">
    <property type="term" value="F:magnesium ion binding"/>
    <property type="evidence" value="ECO:0007669"/>
    <property type="project" value="UniProtKB-UniRule"/>
</dbReference>
<dbReference type="GO" id="GO:0044208">
    <property type="term" value="P:'de novo' AMP biosynthetic process"/>
    <property type="evidence" value="ECO:0007669"/>
    <property type="project" value="UniProtKB-UniRule"/>
</dbReference>
<dbReference type="GO" id="GO:0046040">
    <property type="term" value="P:IMP metabolic process"/>
    <property type="evidence" value="ECO:0007669"/>
    <property type="project" value="TreeGrafter"/>
</dbReference>
<dbReference type="CDD" id="cd03108">
    <property type="entry name" value="AdSS"/>
    <property type="match status" value="1"/>
</dbReference>
<dbReference type="FunFam" id="1.10.300.10:FF:000001">
    <property type="entry name" value="Adenylosuccinate synthetase"/>
    <property type="match status" value="1"/>
</dbReference>
<dbReference type="FunFam" id="3.90.170.10:FF:000001">
    <property type="entry name" value="Adenylosuccinate synthetase"/>
    <property type="match status" value="1"/>
</dbReference>
<dbReference type="Gene3D" id="3.40.440.10">
    <property type="entry name" value="Adenylosuccinate Synthetase, subunit A, domain 1"/>
    <property type="match status" value="1"/>
</dbReference>
<dbReference type="Gene3D" id="1.10.300.10">
    <property type="entry name" value="Adenylosuccinate Synthetase, subunit A, domain 2"/>
    <property type="match status" value="1"/>
</dbReference>
<dbReference type="Gene3D" id="3.90.170.10">
    <property type="entry name" value="Adenylosuccinate Synthetase, subunit A, domain 3"/>
    <property type="match status" value="1"/>
</dbReference>
<dbReference type="HAMAP" id="MF_00011">
    <property type="entry name" value="Adenylosucc_synth"/>
    <property type="match status" value="1"/>
</dbReference>
<dbReference type="InterPro" id="IPR018220">
    <property type="entry name" value="Adenylosuccin_syn_GTP-bd"/>
</dbReference>
<dbReference type="InterPro" id="IPR033128">
    <property type="entry name" value="Adenylosuccin_syn_Lys_AS"/>
</dbReference>
<dbReference type="InterPro" id="IPR042109">
    <property type="entry name" value="Adenylosuccinate_synth_dom1"/>
</dbReference>
<dbReference type="InterPro" id="IPR042110">
    <property type="entry name" value="Adenylosuccinate_synth_dom2"/>
</dbReference>
<dbReference type="InterPro" id="IPR042111">
    <property type="entry name" value="Adenylosuccinate_synth_dom3"/>
</dbReference>
<dbReference type="InterPro" id="IPR001114">
    <property type="entry name" value="Adenylosuccinate_synthetase"/>
</dbReference>
<dbReference type="InterPro" id="IPR027417">
    <property type="entry name" value="P-loop_NTPase"/>
</dbReference>
<dbReference type="NCBIfam" id="NF002223">
    <property type="entry name" value="PRK01117.1"/>
    <property type="match status" value="1"/>
</dbReference>
<dbReference type="NCBIfam" id="TIGR00184">
    <property type="entry name" value="purA"/>
    <property type="match status" value="1"/>
</dbReference>
<dbReference type="PANTHER" id="PTHR11846">
    <property type="entry name" value="ADENYLOSUCCINATE SYNTHETASE"/>
    <property type="match status" value="1"/>
</dbReference>
<dbReference type="PANTHER" id="PTHR11846:SF0">
    <property type="entry name" value="ADENYLOSUCCINATE SYNTHETASE"/>
    <property type="match status" value="1"/>
</dbReference>
<dbReference type="Pfam" id="PF00709">
    <property type="entry name" value="Adenylsucc_synt"/>
    <property type="match status" value="1"/>
</dbReference>
<dbReference type="SMART" id="SM00788">
    <property type="entry name" value="Adenylsucc_synt"/>
    <property type="match status" value="1"/>
</dbReference>
<dbReference type="SUPFAM" id="SSF52540">
    <property type="entry name" value="P-loop containing nucleoside triphosphate hydrolases"/>
    <property type="match status" value="1"/>
</dbReference>
<dbReference type="PROSITE" id="PS01266">
    <property type="entry name" value="ADENYLOSUCCIN_SYN_1"/>
    <property type="match status" value="1"/>
</dbReference>
<dbReference type="PROSITE" id="PS00513">
    <property type="entry name" value="ADENYLOSUCCIN_SYN_2"/>
    <property type="match status" value="1"/>
</dbReference>
<comment type="function">
    <text evidence="1">Plays an important role in the de novo pathway of purine nucleotide biosynthesis. Catalyzes the first committed step in the biosynthesis of AMP from IMP.</text>
</comment>
<comment type="catalytic activity">
    <reaction evidence="1">
        <text>IMP + L-aspartate + GTP = N(6)-(1,2-dicarboxyethyl)-AMP + GDP + phosphate + 2 H(+)</text>
        <dbReference type="Rhea" id="RHEA:15753"/>
        <dbReference type="ChEBI" id="CHEBI:15378"/>
        <dbReference type="ChEBI" id="CHEBI:29991"/>
        <dbReference type="ChEBI" id="CHEBI:37565"/>
        <dbReference type="ChEBI" id="CHEBI:43474"/>
        <dbReference type="ChEBI" id="CHEBI:57567"/>
        <dbReference type="ChEBI" id="CHEBI:58053"/>
        <dbReference type="ChEBI" id="CHEBI:58189"/>
        <dbReference type="EC" id="6.3.4.4"/>
    </reaction>
</comment>
<comment type="cofactor">
    <cofactor evidence="1">
        <name>Mg(2+)</name>
        <dbReference type="ChEBI" id="CHEBI:18420"/>
    </cofactor>
    <text evidence="1">Binds 1 Mg(2+) ion per subunit.</text>
</comment>
<comment type="pathway">
    <text evidence="1">Purine metabolism; AMP biosynthesis via de novo pathway; AMP from IMP: step 1/2.</text>
</comment>
<comment type="subunit">
    <text evidence="1">Homodimer.</text>
</comment>
<comment type="subcellular location">
    <subcellularLocation>
        <location evidence="1">Cytoplasm</location>
    </subcellularLocation>
</comment>
<comment type="similarity">
    <text evidence="1">Belongs to the adenylosuccinate synthetase family.</text>
</comment>
<feature type="chain" id="PRO_1000194754" description="Adenylosuccinate synthetase">
    <location>
        <begin position="1"/>
        <end position="432"/>
    </location>
</feature>
<feature type="active site" description="Proton acceptor" evidence="1">
    <location>
        <position position="14"/>
    </location>
</feature>
<feature type="active site" description="Proton donor" evidence="1">
    <location>
        <position position="42"/>
    </location>
</feature>
<feature type="binding site" evidence="1">
    <location>
        <begin position="13"/>
        <end position="19"/>
    </location>
    <ligand>
        <name>GTP</name>
        <dbReference type="ChEBI" id="CHEBI:37565"/>
    </ligand>
</feature>
<feature type="binding site" description="in other chain" evidence="1">
    <location>
        <begin position="14"/>
        <end position="17"/>
    </location>
    <ligand>
        <name>IMP</name>
        <dbReference type="ChEBI" id="CHEBI:58053"/>
        <note>ligand shared between dimeric partners</note>
    </ligand>
</feature>
<feature type="binding site" evidence="1">
    <location>
        <position position="14"/>
    </location>
    <ligand>
        <name>Mg(2+)</name>
        <dbReference type="ChEBI" id="CHEBI:18420"/>
    </ligand>
</feature>
<feature type="binding site" description="in other chain" evidence="1">
    <location>
        <begin position="39"/>
        <end position="42"/>
    </location>
    <ligand>
        <name>IMP</name>
        <dbReference type="ChEBI" id="CHEBI:58053"/>
        <note>ligand shared between dimeric partners</note>
    </ligand>
</feature>
<feature type="binding site" evidence="1">
    <location>
        <begin position="41"/>
        <end position="43"/>
    </location>
    <ligand>
        <name>GTP</name>
        <dbReference type="ChEBI" id="CHEBI:37565"/>
    </ligand>
</feature>
<feature type="binding site" evidence="1">
    <location>
        <position position="41"/>
    </location>
    <ligand>
        <name>Mg(2+)</name>
        <dbReference type="ChEBI" id="CHEBI:18420"/>
    </ligand>
</feature>
<feature type="binding site" description="in other chain" evidence="1">
    <location>
        <position position="130"/>
    </location>
    <ligand>
        <name>IMP</name>
        <dbReference type="ChEBI" id="CHEBI:58053"/>
        <note>ligand shared between dimeric partners</note>
    </ligand>
</feature>
<feature type="binding site" evidence="1">
    <location>
        <position position="144"/>
    </location>
    <ligand>
        <name>IMP</name>
        <dbReference type="ChEBI" id="CHEBI:58053"/>
        <note>ligand shared between dimeric partners</note>
    </ligand>
</feature>
<feature type="binding site" description="in other chain" evidence="1">
    <location>
        <position position="225"/>
    </location>
    <ligand>
        <name>IMP</name>
        <dbReference type="ChEBI" id="CHEBI:58053"/>
        <note>ligand shared between dimeric partners</note>
    </ligand>
</feature>
<feature type="binding site" description="in other chain" evidence="1">
    <location>
        <position position="240"/>
    </location>
    <ligand>
        <name>IMP</name>
        <dbReference type="ChEBI" id="CHEBI:58053"/>
        <note>ligand shared between dimeric partners</note>
    </ligand>
</feature>
<feature type="binding site" evidence="1">
    <location>
        <begin position="300"/>
        <end position="306"/>
    </location>
    <ligand>
        <name>substrate</name>
    </ligand>
</feature>
<feature type="binding site" description="in other chain" evidence="1">
    <location>
        <position position="304"/>
    </location>
    <ligand>
        <name>IMP</name>
        <dbReference type="ChEBI" id="CHEBI:58053"/>
        <note>ligand shared between dimeric partners</note>
    </ligand>
</feature>
<feature type="binding site" evidence="1">
    <location>
        <position position="306"/>
    </location>
    <ligand>
        <name>GTP</name>
        <dbReference type="ChEBI" id="CHEBI:37565"/>
    </ligand>
</feature>
<feature type="binding site" evidence="1">
    <location>
        <begin position="332"/>
        <end position="334"/>
    </location>
    <ligand>
        <name>GTP</name>
        <dbReference type="ChEBI" id="CHEBI:37565"/>
    </ligand>
</feature>
<feature type="binding site" evidence="1">
    <location>
        <begin position="415"/>
        <end position="417"/>
    </location>
    <ligand>
        <name>GTP</name>
        <dbReference type="ChEBI" id="CHEBI:37565"/>
    </ligand>
</feature>
<reference key="1">
    <citation type="journal article" date="2009" name="PLoS Genet.">
        <title>Organised genome dynamics in the Escherichia coli species results in highly diverse adaptive paths.</title>
        <authorList>
            <person name="Touchon M."/>
            <person name="Hoede C."/>
            <person name="Tenaillon O."/>
            <person name="Barbe V."/>
            <person name="Baeriswyl S."/>
            <person name="Bidet P."/>
            <person name="Bingen E."/>
            <person name="Bonacorsi S."/>
            <person name="Bouchier C."/>
            <person name="Bouvet O."/>
            <person name="Calteau A."/>
            <person name="Chiapello H."/>
            <person name="Clermont O."/>
            <person name="Cruveiller S."/>
            <person name="Danchin A."/>
            <person name="Diard M."/>
            <person name="Dossat C."/>
            <person name="Karoui M.E."/>
            <person name="Frapy E."/>
            <person name="Garry L."/>
            <person name="Ghigo J.M."/>
            <person name="Gilles A.M."/>
            <person name="Johnson J."/>
            <person name="Le Bouguenec C."/>
            <person name="Lescat M."/>
            <person name="Mangenot S."/>
            <person name="Martinez-Jehanne V."/>
            <person name="Matic I."/>
            <person name="Nassif X."/>
            <person name="Oztas S."/>
            <person name="Petit M.A."/>
            <person name="Pichon C."/>
            <person name="Rouy Z."/>
            <person name="Ruf C.S."/>
            <person name="Schneider D."/>
            <person name="Tourret J."/>
            <person name="Vacherie B."/>
            <person name="Vallenet D."/>
            <person name="Medigue C."/>
            <person name="Rocha E.P.C."/>
            <person name="Denamur E."/>
        </authorList>
    </citation>
    <scope>NUCLEOTIDE SEQUENCE [LARGE SCALE GENOMIC DNA]</scope>
    <source>
        <strain>UMN026 / ExPEC</strain>
    </source>
</reference>
<organism>
    <name type="scientific">Escherichia coli O17:K52:H18 (strain UMN026 / ExPEC)</name>
    <dbReference type="NCBI Taxonomy" id="585056"/>
    <lineage>
        <taxon>Bacteria</taxon>
        <taxon>Pseudomonadati</taxon>
        <taxon>Pseudomonadota</taxon>
        <taxon>Gammaproteobacteria</taxon>
        <taxon>Enterobacterales</taxon>
        <taxon>Enterobacteriaceae</taxon>
        <taxon>Escherichia</taxon>
    </lineage>
</organism>
<evidence type="ECO:0000255" key="1">
    <source>
        <dbReference type="HAMAP-Rule" id="MF_00011"/>
    </source>
</evidence>
<proteinExistence type="inferred from homology"/>
<name>PURA_ECOLU</name>